<keyword id="KW-1015">Disulfide bond</keyword>
<keyword id="KW-0960">Knottin</keyword>
<keyword id="KW-0964">Secreted</keyword>
<keyword id="KW-0732">Signal</keyword>
<keyword id="KW-0800">Toxin</keyword>
<protein>
    <recommendedName>
        <fullName>U1-lycotoxin-Ls1v</fullName>
    </recommendedName>
    <alternativeName>
        <fullName>Toxin-like structure LSTX-A38</fullName>
    </alternativeName>
</protein>
<proteinExistence type="evidence at transcript level"/>
<comment type="subcellular location">
    <subcellularLocation>
        <location evidence="1">Secreted</location>
    </subcellularLocation>
</comment>
<comment type="tissue specificity">
    <text>Expressed by the venom gland.</text>
</comment>
<comment type="domain">
    <text evidence="1">The presence of a 'disulfide through disulfide knot' structurally defines this protein as a knottin.</text>
</comment>
<comment type="similarity">
    <text evidence="3">Belongs to the neurotoxin 19 (CSTX) family. 04 (U1-Lctx) subfamily.</text>
</comment>
<organism>
    <name type="scientific">Lycosa singoriensis</name>
    <name type="common">Wolf spider</name>
    <name type="synonym">Aranea singoriensis</name>
    <dbReference type="NCBI Taxonomy" id="434756"/>
    <lineage>
        <taxon>Eukaryota</taxon>
        <taxon>Metazoa</taxon>
        <taxon>Ecdysozoa</taxon>
        <taxon>Arthropoda</taxon>
        <taxon>Chelicerata</taxon>
        <taxon>Arachnida</taxon>
        <taxon>Araneae</taxon>
        <taxon>Araneomorphae</taxon>
        <taxon>Entelegynae</taxon>
        <taxon>Lycosoidea</taxon>
        <taxon>Lycosidae</taxon>
        <taxon>Lycosa</taxon>
    </lineage>
</organism>
<name>TX138_LYCSI</name>
<accession>B6DCM7</accession>
<feature type="signal peptide" evidence="2">
    <location>
        <begin position="1"/>
        <end position="20"/>
    </location>
</feature>
<feature type="propeptide" id="PRO_0000401571" evidence="1">
    <location>
        <begin position="21"/>
        <end position="41"/>
    </location>
</feature>
<feature type="chain" id="PRO_0000401572" description="U1-lycotoxin-Ls1v">
    <location>
        <begin position="42"/>
        <end position="107"/>
    </location>
</feature>
<feature type="disulfide bond" evidence="1">
    <location>
        <begin position="44"/>
        <end position="59"/>
    </location>
</feature>
<feature type="disulfide bond" evidence="1">
    <location>
        <begin position="51"/>
        <end position="68"/>
    </location>
</feature>
<feature type="disulfide bond" evidence="1">
    <location>
        <begin position="58"/>
        <end position="86"/>
    </location>
</feature>
<feature type="disulfide bond" evidence="1">
    <location>
        <begin position="70"/>
        <end position="84"/>
    </location>
</feature>
<reference key="1">
    <citation type="journal article" date="2010" name="Zoology">
        <title>Transcriptome analysis of the venom glands of the Chinese wolf spider Lycosa singoriensis.</title>
        <authorList>
            <person name="Zhang Y."/>
            <person name="Chen J."/>
            <person name="Tang X."/>
            <person name="Wang F."/>
            <person name="Jiang L."/>
            <person name="Xiong X."/>
            <person name="Wang M."/>
            <person name="Rong M."/>
            <person name="Liu Z."/>
            <person name="Liang S."/>
        </authorList>
    </citation>
    <scope>NUCLEOTIDE SEQUENCE [LARGE SCALE MRNA]</scope>
    <source>
        <tissue>Venom gland</tissue>
    </source>
</reference>
<sequence length="107" mass="11818">MMKVLVVVALLVTLISYSSSEGIDDLEADELLSLTANEQTRKECIPKHHECTSNKHGCCRGNFFKYKCQCTTVVTQDGEQTERCFCGTPPHHKAAELVVGFGKKILG</sequence>
<dbReference type="EMBL" id="EU925961">
    <property type="protein sequence ID" value="ACI41293.1"/>
    <property type="molecule type" value="mRNA"/>
</dbReference>
<dbReference type="EMBL" id="FM863965">
    <property type="protein sequence ID" value="CAS03563.1"/>
    <property type="molecule type" value="mRNA"/>
</dbReference>
<dbReference type="SMR" id="B6DCM7"/>
<dbReference type="ArachnoServer" id="AS000910">
    <property type="toxin name" value="U1-lycotoxin-Ls1v"/>
</dbReference>
<dbReference type="GO" id="GO:0005576">
    <property type="term" value="C:extracellular region"/>
    <property type="evidence" value="ECO:0007669"/>
    <property type="project" value="UniProtKB-SubCell"/>
</dbReference>
<dbReference type="GO" id="GO:0090729">
    <property type="term" value="F:toxin activity"/>
    <property type="evidence" value="ECO:0007669"/>
    <property type="project" value="UniProtKB-KW"/>
</dbReference>
<dbReference type="InterPro" id="IPR019553">
    <property type="entry name" value="Spider_toxin_CSTX_knottin"/>
</dbReference>
<dbReference type="InterPro" id="IPR011142">
    <property type="entry name" value="Spider_toxin_CSTX_Knottin_CS"/>
</dbReference>
<dbReference type="Pfam" id="PF10530">
    <property type="entry name" value="Toxin_35"/>
    <property type="match status" value="1"/>
</dbReference>
<dbReference type="PROSITE" id="PS60029">
    <property type="entry name" value="SPIDER_CSTX"/>
    <property type="match status" value="1"/>
</dbReference>
<evidence type="ECO:0000250" key="1"/>
<evidence type="ECO:0000255" key="2"/>
<evidence type="ECO:0000305" key="3"/>